<name>YICS_SALPA</name>
<dbReference type="EMBL" id="CP000026">
    <property type="protein sequence ID" value="AAV79422.1"/>
    <property type="molecule type" value="Genomic_DNA"/>
</dbReference>
<dbReference type="RefSeq" id="WP_000824212.1">
    <property type="nucleotide sequence ID" value="NC_006511.1"/>
</dbReference>
<dbReference type="SMR" id="Q5PC60"/>
<dbReference type="KEGG" id="spt:SPA3624"/>
<dbReference type="HOGENOM" id="CLU_159877_2_0_6"/>
<dbReference type="Proteomes" id="UP000008185">
    <property type="component" value="Chromosome"/>
</dbReference>
<dbReference type="InterPro" id="IPR048144">
    <property type="entry name" value="YicS_fam"/>
</dbReference>
<dbReference type="NCBIfam" id="NF041639">
    <property type="entry name" value="YicS_fam"/>
    <property type="match status" value="1"/>
</dbReference>
<feature type="chain" id="PRO_0000262299" description="Uncharacterized protein YicS">
    <location>
        <begin position="1"/>
        <end position="97"/>
    </location>
</feature>
<accession>Q5PC60</accession>
<organism>
    <name type="scientific">Salmonella paratyphi A (strain ATCC 9150 / SARB42)</name>
    <dbReference type="NCBI Taxonomy" id="295319"/>
    <lineage>
        <taxon>Bacteria</taxon>
        <taxon>Pseudomonadati</taxon>
        <taxon>Pseudomonadota</taxon>
        <taxon>Gammaproteobacteria</taxon>
        <taxon>Enterobacterales</taxon>
        <taxon>Enterobacteriaceae</taxon>
        <taxon>Salmonella</taxon>
    </lineage>
</organism>
<protein>
    <recommendedName>
        <fullName>Uncharacterized protein YicS</fullName>
    </recommendedName>
</protein>
<proteinExistence type="predicted"/>
<gene>
    <name type="primary">yicS</name>
    <name type="ordered locus">SPA3624</name>
</gene>
<reference key="1">
    <citation type="journal article" date="2004" name="Nat. Genet.">
        <title>Comparison of genome degradation in Paratyphi A and Typhi, human-restricted serovars of Salmonella enterica that cause typhoid.</title>
        <authorList>
            <person name="McClelland M."/>
            <person name="Sanderson K.E."/>
            <person name="Clifton S.W."/>
            <person name="Latreille P."/>
            <person name="Porwollik S."/>
            <person name="Sabo A."/>
            <person name="Meyer R."/>
            <person name="Bieri T."/>
            <person name="Ozersky P."/>
            <person name="McLellan M."/>
            <person name="Harkins C.R."/>
            <person name="Wang C."/>
            <person name="Nguyen C."/>
            <person name="Berghoff A."/>
            <person name="Elliott G."/>
            <person name="Kohlberg S."/>
            <person name="Strong C."/>
            <person name="Du F."/>
            <person name="Carter J."/>
            <person name="Kremizki C."/>
            <person name="Layman D."/>
            <person name="Leonard S."/>
            <person name="Sun H."/>
            <person name="Fulton L."/>
            <person name="Nash W."/>
            <person name="Miner T."/>
            <person name="Minx P."/>
            <person name="Delehaunty K."/>
            <person name="Fronick C."/>
            <person name="Magrini V."/>
            <person name="Nhan M."/>
            <person name="Warren W."/>
            <person name="Florea L."/>
            <person name="Spieth J."/>
            <person name="Wilson R.K."/>
        </authorList>
    </citation>
    <scope>NUCLEOTIDE SEQUENCE [LARGE SCALE GENOMIC DNA]</scope>
    <source>
        <strain>ATCC 9150 / SARB42</strain>
    </source>
</reference>
<sequence>MKRKTLLLIAALVALPGVTYADSPFSSLQSAHEKNTILKDLRKMCTPKGALTDEAWEKKIMASEGNQQHIREAMIAIERNNQHNYWQALGKVECPEM</sequence>